<gene>
    <name evidence="7" type="primary">ZNF697</name>
</gene>
<comment type="function">
    <text evidence="1">RNA-interacting protein with a high number of miRNA targets. Acts as a damage-induced regulator of muscle remodeling by mediating the interferon gamma response in muscle cells.</text>
</comment>
<comment type="interaction">
    <interactant intactId="EBI-25845217">
        <id>Q5TEC3</id>
    </interactant>
    <interactant intactId="EBI-10968534">
        <id>P50570-2</id>
        <label>DNM2</label>
    </interactant>
    <organismsDiffer>false</organismsDiffer>
    <experiments>3</experiments>
</comment>
<comment type="interaction">
    <interactant intactId="EBI-25845217">
        <id>Q5TEC3</id>
    </interactant>
    <interactant intactId="EBI-11110431">
        <id>Q8TB36</id>
        <label>GDAP1</label>
    </interactant>
    <organismsDiffer>false</organismsDiffer>
    <experiments>3</experiments>
</comment>
<comment type="interaction">
    <interactant intactId="EBI-25845217">
        <id>Q5TEC3</id>
    </interactant>
    <interactant intactId="EBI-747754">
        <id>P28799</id>
        <label>GRN</label>
    </interactant>
    <organismsDiffer>false</organismsDiffer>
    <experiments>3</experiments>
</comment>
<comment type="interaction">
    <interactant intactId="EBI-25845217">
        <id>Q5TEC3</id>
    </interactant>
    <interactant intactId="EBI-466029">
        <id>P42858</id>
        <label>HTT</label>
    </interactant>
    <organismsDiffer>false</organismsDiffer>
    <experiments>3</experiments>
</comment>
<comment type="interaction">
    <interactant intactId="EBI-25845217">
        <id>Q5TEC3</id>
    </interactant>
    <interactant intactId="EBI-720609">
        <id>O76024</id>
        <label>WFS1</label>
    </interactant>
    <organismsDiffer>false</organismsDiffer>
    <experiments>3</experiments>
</comment>
<comment type="subcellular location">
    <subcellularLocation>
        <location evidence="1">Nucleus</location>
    </subcellularLocation>
</comment>
<comment type="induction">
    <text evidence="5">Expression is transiently elevated during intense exercise and recovery from muscle atrophy or injury.</text>
</comment>
<comment type="similarity">
    <text evidence="6">Belongs to the krueppel C2H2-type zinc-finger protein family.</text>
</comment>
<name>ZN697_HUMAN</name>
<evidence type="ECO:0000250" key="1">
    <source>
        <dbReference type="UniProtKB" id="Q569E7"/>
    </source>
</evidence>
<evidence type="ECO:0000255" key="2">
    <source>
        <dbReference type="PROSITE-ProRule" id="PRU00042"/>
    </source>
</evidence>
<evidence type="ECO:0000256" key="3">
    <source>
        <dbReference type="SAM" id="MobiDB-lite"/>
    </source>
</evidence>
<evidence type="ECO:0000269" key="4">
    <source>
    </source>
</evidence>
<evidence type="ECO:0000269" key="5">
    <source>
    </source>
</evidence>
<evidence type="ECO:0000305" key="6"/>
<evidence type="ECO:0000312" key="7">
    <source>
        <dbReference type="HGNC" id="HGNC:32034"/>
    </source>
</evidence>
<evidence type="ECO:0007744" key="8">
    <source>
    </source>
</evidence>
<sequence>MKQEDNQGVCAHQDSEDKGMGSDFEDSEDREGDPEEREMGSNPHDTNKREGHPEPEMGSNPQDSRHREAVPDICTEGQLSEEEGVSVRGEEDDQSGVADMAMFPGLSESDSISRSLREDDDESAGENRLEEEEEQPAPPVLPWRRHLSLGSRHRGDKPAHRRFHRLHHPMAVDLGELDSLVASIMDAPTICPDCGESFSPGAAFLQHQRIHRLAEAAAAASLEPFGLAGECDAMVGMMGVGVAGGFGAGPPLARPPREKPFRCGECGKGFSRNTYLTNHLRLHTGERPNLCADCGKSFSWRADLLKHRRLHTGEKPYPCPECGEAFSLSSHLLSHRRAHAAASGAGAAALRPFACGECGKGFVRRSHLANHQRIHTGEKPHGCGECGKRFSWRSDLVKHQRVHTGEKPYMCSECGETFSVSSHLFTHKRTHSGERPYVCRECGKGFGRNSHLVNHLRVHTGEKPFRCGQCEKRFSDFSTLTQHQRTHTGEKPYTCIECGKSFIQSSHLIRHRRIHTGNKPHKCAGCGKGFRYKTHLAQHQKLHLC</sequence>
<proteinExistence type="evidence at protein level"/>
<feature type="chain" id="PRO_0000305138" description="Zinc finger protein 697">
    <location>
        <begin position="1"/>
        <end position="545"/>
    </location>
</feature>
<feature type="zinc finger region" description="C2H2-type 1" evidence="2">
    <location>
        <begin position="189"/>
        <end position="211"/>
    </location>
</feature>
<feature type="zinc finger region" description="C2H2-type 2" evidence="2">
    <location>
        <begin position="261"/>
        <end position="283"/>
    </location>
</feature>
<feature type="zinc finger region" description="C2H2-type 3" evidence="2">
    <location>
        <begin position="289"/>
        <end position="311"/>
    </location>
</feature>
<feature type="zinc finger region" description="C2H2-type 4" evidence="2">
    <location>
        <begin position="317"/>
        <end position="339"/>
    </location>
</feature>
<feature type="zinc finger region" description="C2H2-type 5" evidence="2">
    <location>
        <begin position="353"/>
        <end position="375"/>
    </location>
</feature>
<feature type="zinc finger region" description="C2H2-type 6" evidence="2">
    <location>
        <begin position="381"/>
        <end position="403"/>
    </location>
</feature>
<feature type="zinc finger region" description="C2H2-type 7" evidence="2">
    <location>
        <begin position="409"/>
        <end position="431"/>
    </location>
</feature>
<feature type="zinc finger region" description="C2H2-type 8" evidence="2">
    <location>
        <begin position="437"/>
        <end position="459"/>
    </location>
</feature>
<feature type="zinc finger region" description="C2H2-type 9" evidence="2">
    <location>
        <begin position="465"/>
        <end position="487"/>
    </location>
</feature>
<feature type="zinc finger region" description="C2H2-type 10" evidence="2">
    <location>
        <begin position="493"/>
        <end position="515"/>
    </location>
</feature>
<feature type="zinc finger region" description="C2H2-type 11" evidence="2">
    <location>
        <begin position="521"/>
        <end position="543"/>
    </location>
</feature>
<feature type="region of interest" description="Disordered" evidence="3">
    <location>
        <begin position="1"/>
        <end position="143"/>
    </location>
</feature>
<feature type="compositionally biased region" description="Acidic residues" evidence="3">
    <location>
        <begin position="23"/>
        <end position="36"/>
    </location>
</feature>
<feature type="compositionally biased region" description="Basic and acidic residues" evidence="3">
    <location>
        <begin position="45"/>
        <end position="55"/>
    </location>
</feature>
<feature type="compositionally biased region" description="Acidic residues" evidence="3">
    <location>
        <begin position="79"/>
        <end position="94"/>
    </location>
</feature>
<feature type="compositionally biased region" description="Acidic residues" evidence="3">
    <location>
        <begin position="118"/>
        <end position="135"/>
    </location>
</feature>
<feature type="cross-link" description="Glycyl lysine isopeptide (Lys-Gly) (interchain with G-Cter in SUMO2)" evidence="8">
    <location>
        <position position="2"/>
    </location>
</feature>
<feature type="sequence variant" id="VAR_078436" evidence="4">
    <original>P</original>
    <variation>T</variation>
    <location>
        <position position="158"/>
    </location>
</feature>
<reference key="1">
    <citation type="journal article" date="2006" name="Nature">
        <title>The DNA sequence and biological annotation of human chromosome 1.</title>
        <authorList>
            <person name="Gregory S.G."/>
            <person name="Barlow K.F."/>
            <person name="McLay K.E."/>
            <person name="Kaul R."/>
            <person name="Swarbreck D."/>
            <person name="Dunham A."/>
            <person name="Scott C.E."/>
            <person name="Howe K.L."/>
            <person name="Woodfine K."/>
            <person name="Spencer C.C.A."/>
            <person name="Jones M.C."/>
            <person name="Gillson C."/>
            <person name="Searle S."/>
            <person name="Zhou Y."/>
            <person name="Kokocinski F."/>
            <person name="McDonald L."/>
            <person name="Evans R."/>
            <person name="Phillips K."/>
            <person name="Atkinson A."/>
            <person name="Cooper R."/>
            <person name="Jones C."/>
            <person name="Hall R.E."/>
            <person name="Andrews T.D."/>
            <person name="Lloyd C."/>
            <person name="Ainscough R."/>
            <person name="Almeida J.P."/>
            <person name="Ambrose K.D."/>
            <person name="Anderson F."/>
            <person name="Andrew R.W."/>
            <person name="Ashwell R.I.S."/>
            <person name="Aubin K."/>
            <person name="Babbage A.K."/>
            <person name="Bagguley C.L."/>
            <person name="Bailey J."/>
            <person name="Beasley H."/>
            <person name="Bethel G."/>
            <person name="Bird C.P."/>
            <person name="Bray-Allen S."/>
            <person name="Brown J.Y."/>
            <person name="Brown A.J."/>
            <person name="Buckley D."/>
            <person name="Burton J."/>
            <person name="Bye J."/>
            <person name="Carder C."/>
            <person name="Chapman J.C."/>
            <person name="Clark S.Y."/>
            <person name="Clarke G."/>
            <person name="Clee C."/>
            <person name="Cobley V."/>
            <person name="Collier R.E."/>
            <person name="Corby N."/>
            <person name="Coville G.J."/>
            <person name="Davies J."/>
            <person name="Deadman R."/>
            <person name="Dunn M."/>
            <person name="Earthrowl M."/>
            <person name="Ellington A.G."/>
            <person name="Errington H."/>
            <person name="Frankish A."/>
            <person name="Frankland J."/>
            <person name="French L."/>
            <person name="Garner P."/>
            <person name="Garnett J."/>
            <person name="Gay L."/>
            <person name="Ghori M.R.J."/>
            <person name="Gibson R."/>
            <person name="Gilby L.M."/>
            <person name="Gillett W."/>
            <person name="Glithero R.J."/>
            <person name="Grafham D.V."/>
            <person name="Griffiths C."/>
            <person name="Griffiths-Jones S."/>
            <person name="Grocock R."/>
            <person name="Hammond S."/>
            <person name="Harrison E.S.I."/>
            <person name="Hart E."/>
            <person name="Haugen E."/>
            <person name="Heath P.D."/>
            <person name="Holmes S."/>
            <person name="Holt K."/>
            <person name="Howden P.J."/>
            <person name="Hunt A.R."/>
            <person name="Hunt S.E."/>
            <person name="Hunter G."/>
            <person name="Isherwood J."/>
            <person name="James R."/>
            <person name="Johnson C."/>
            <person name="Johnson D."/>
            <person name="Joy A."/>
            <person name="Kay M."/>
            <person name="Kershaw J.K."/>
            <person name="Kibukawa M."/>
            <person name="Kimberley A.M."/>
            <person name="King A."/>
            <person name="Knights A.J."/>
            <person name="Lad H."/>
            <person name="Laird G."/>
            <person name="Lawlor S."/>
            <person name="Leongamornlert D.A."/>
            <person name="Lloyd D.M."/>
            <person name="Loveland J."/>
            <person name="Lovell J."/>
            <person name="Lush M.J."/>
            <person name="Lyne R."/>
            <person name="Martin S."/>
            <person name="Mashreghi-Mohammadi M."/>
            <person name="Matthews L."/>
            <person name="Matthews N.S.W."/>
            <person name="McLaren S."/>
            <person name="Milne S."/>
            <person name="Mistry S."/>
            <person name="Moore M.J.F."/>
            <person name="Nickerson T."/>
            <person name="O'Dell C.N."/>
            <person name="Oliver K."/>
            <person name="Palmeiri A."/>
            <person name="Palmer S.A."/>
            <person name="Parker A."/>
            <person name="Patel D."/>
            <person name="Pearce A.V."/>
            <person name="Peck A.I."/>
            <person name="Pelan S."/>
            <person name="Phelps K."/>
            <person name="Phillimore B.J."/>
            <person name="Plumb R."/>
            <person name="Rajan J."/>
            <person name="Raymond C."/>
            <person name="Rouse G."/>
            <person name="Saenphimmachak C."/>
            <person name="Sehra H.K."/>
            <person name="Sheridan E."/>
            <person name="Shownkeen R."/>
            <person name="Sims S."/>
            <person name="Skuce C.D."/>
            <person name="Smith M."/>
            <person name="Steward C."/>
            <person name="Subramanian S."/>
            <person name="Sycamore N."/>
            <person name="Tracey A."/>
            <person name="Tromans A."/>
            <person name="Van Helmond Z."/>
            <person name="Wall M."/>
            <person name="Wallis J.M."/>
            <person name="White S."/>
            <person name="Whitehead S.L."/>
            <person name="Wilkinson J.E."/>
            <person name="Willey D.L."/>
            <person name="Williams H."/>
            <person name="Wilming L."/>
            <person name="Wray P.W."/>
            <person name="Wu Z."/>
            <person name="Coulson A."/>
            <person name="Vaudin M."/>
            <person name="Sulston J.E."/>
            <person name="Durbin R.M."/>
            <person name="Hubbard T."/>
            <person name="Wooster R."/>
            <person name="Dunham I."/>
            <person name="Carter N.P."/>
            <person name="McVean G."/>
            <person name="Ross M.T."/>
            <person name="Harrow J."/>
            <person name="Olson M.V."/>
            <person name="Beck S."/>
            <person name="Rogers J."/>
            <person name="Bentley D.R."/>
        </authorList>
    </citation>
    <scope>NUCLEOTIDE SEQUENCE [LARGE SCALE GENOMIC DNA]</scope>
</reference>
<reference key="2">
    <citation type="journal article" date="2004" name="Genome Res.">
        <title>The status, quality, and expansion of the NIH full-length cDNA project: the Mammalian Gene Collection (MGC).</title>
        <authorList>
            <consortium name="The MGC Project Team"/>
        </authorList>
    </citation>
    <scope>NUCLEOTIDE SEQUENCE [LARGE SCALE MRNA] OF 316-545</scope>
    <source>
        <tissue>Skin</tissue>
    </source>
</reference>
<reference key="3">
    <citation type="journal article" date="2017" name="Nat. Struct. Mol. Biol.">
        <title>Site-specific mapping of the human SUMO proteome reveals co-modification with phosphorylation.</title>
        <authorList>
            <person name="Hendriks I.A."/>
            <person name="Lyon D."/>
            <person name="Young C."/>
            <person name="Jensen L.J."/>
            <person name="Vertegaal A.C."/>
            <person name="Nielsen M.L."/>
        </authorList>
    </citation>
    <scope>SUMOYLATION [LARGE SCALE ANALYSIS] AT LYS-2</scope>
    <scope>IDENTIFICATION BY MASS SPECTROMETRY [LARGE SCALE ANALYSIS]</scope>
</reference>
<reference key="4">
    <citation type="journal article" date="2024" name="Proc. Natl. Acad. Sci. U.S.A.">
        <title>Zfp697 is an RNA-binding protein that regulates skeletal muscle inflammation and remodeling.</title>
        <authorList>
            <person name="Correia J.C."/>
            <person name="Jannig P.R."/>
            <person name="Gosztyla M.L."/>
            <person name="Cervenka I."/>
            <person name="Ducommun S."/>
            <person name="Praestholm S.M."/>
            <person name="Dias J.M."/>
            <person name="Dumont K.D."/>
            <person name="Liu Z."/>
            <person name="Liang Q."/>
            <person name="Edsgaerd D."/>
            <person name="Emanuelsson O."/>
            <person name="Gregorevic P."/>
            <person name="Westerblad H."/>
            <person name="Venckunas T."/>
            <person name="Brazaitis M."/>
            <person name="Kamandulis S."/>
            <person name="Lanner J.T."/>
            <person name="Teixeira A.I."/>
            <person name="Yeo G.W."/>
            <person name="Ruas J.L."/>
        </authorList>
    </citation>
    <scope>INDUCTION BY INJURY</scope>
</reference>
<reference key="5">
    <citation type="journal article" date="2017" name="Hum. Mutat.">
        <title>Mutations of the aminoacyl-tRNA-synthetases SARS and WARS2 are implicated in the aetiology of autosomal recessive intellectual disability.</title>
        <authorList>
            <person name="Musante L."/>
            <person name="Puettmann L."/>
            <person name="Kahrizi K."/>
            <person name="Garshasbi M."/>
            <person name="Hu H."/>
            <person name="Stehr H."/>
            <person name="Lipkowitz B."/>
            <person name="Otto S."/>
            <person name="Jensen L.R."/>
            <person name="Tzschach A."/>
            <person name="Jamali P."/>
            <person name="Wienker T."/>
            <person name="Najmabadi H."/>
            <person name="Ropers H.H."/>
            <person name="Kuss A.W."/>
        </authorList>
    </citation>
    <scope>VARIANT THR-158</scope>
</reference>
<accession>Q5TEC3</accession>
<accession>Q96IT2</accession>
<organism>
    <name type="scientific">Homo sapiens</name>
    <name type="common">Human</name>
    <dbReference type="NCBI Taxonomy" id="9606"/>
    <lineage>
        <taxon>Eukaryota</taxon>
        <taxon>Metazoa</taxon>
        <taxon>Chordata</taxon>
        <taxon>Craniata</taxon>
        <taxon>Vertebrata</taxon>
        <taxon>Euteleostomi</taxon>
        <taxon>Mammalia</taxon>
        <taxon>Eutheria</taxon>
        <taxon>Euarchontoglires</taxon>
        <taxon>Primates</taxon>
        <taxon>Haplorrhini</taxon>
        <taxon>Catarrhini</taxon>
        <taxon>Hominidae</taxon>
        <taxon>Homo</taxon>
    </lineage>
</organism>
<dbReference type="EMBL" id="AL109966">
    <property type="status" value="NOT_ANNOTATED_CDS"/>
    <property type="molecule type" value="Genomic_DNA"/>
</dbReference>
<dbReference type="EMBL" id="BC007260">
    <property type="protein sequence ID" value="AAH07260.1"/>
    <property type="molecule type" value="mRNA"/>
</dbReference>
<dbReference type="CCDS" id="CCDS44202.1"/>
<dbReference type="RefSeq" id="NP_001073939.1">
    <property type="nucleotide sequence ID" value="NM_001080470.2"/>
</dbReference>
<dbReference type="RefSeq" id="XP_005271372.1">
    <property type="nucleotide sequence ID" value="XM_005271315.4"/>
</dbReference>
<dbReference type="RefSeq" id="XP_011540718.1">
    <property type="nucleotide sequence ID" value="XM_011542416.2"/>
</dbReference>
<dbReference type="RefSeq" id="XP_047289805.1">
    <property type="nucleotide sequence ID" value="XM_047433849.1"/>
</dbReference>
<dbReference type="RefSeq" id="XP_054195508.1">
    <property type="nucleotide sequence ID" value="XM_054339533.1"/>
</dbReference>
<dbReference type="RefSeq" id="XP_054195509.1">
    <property type="nucleotide sequence ID" value="XM_054339534.1"/>
</dbReference>
<dbReference type="SMR" id="Q5TEC3"/>
<dbReference type="BioGRID" id="124778">
    <property type="interactions" value="16"/>
</dbReference>
<dbReference type="FunCoup" id="Q5TEC3">
    <property type="interactions" value="9"/>
</dbReference>
<dbReference type="IntAct" id="Q5TEC3">
    <property type="interactions" value="6"/>
</dbReference>
<dbReference type="STRING" id="9606.ENSP00000396857"/>
<dbReference type="iPTMnet" id="Q5TEC3"/>
<dbReference type="PhosphoSitePlus" id="Q5TEC3"/>
<dbReference type="BioMuta" id="ZNF697"/>
<dbReference type="DMDM" id="158706492"/>
<dbReference type="jPOST" id="Q5TEC3"/>
<dbReference type="MassIVE" id="Q5TEC3"/>
<dbReference type="PaxDb" id="9606-ENSP00000396857"/>
<dbReference type="PeptideAtlas" id="Q5TEC3"/>
<dbReference type="ProteomicsDB" id="65041"/>
<dbReference type="Antibodypedia" id="33915">
    <property type="antibodies" value="91 antibodies from 16 providers"/>
</dbReference>
<dbReference type="DNASU" id="90874"/>
<dbReference type="Ensembl" id="ENST00000421812.3">
    <property type="protein sequence ID" value="ENSP00000396857.2"/>
    <property type="gene ID" value="ENSG00000143067.5"/>
</dbReference>
<dbReference type="GeneID" id="90874"/>
<dbReference type="KEGG" id="hsa:90874"/>
<dbReference type="MANE-Select" id="ENST00000421812.3">
    <property type="protein sequence ID" value="ENSP00000396857.2"/>
    <property type="RefSeq nucleotide sequence ID" value="NM_001080470.2"/>
    <property type="RefSeq protein sequence ID" value="NP_001073939.1"/>
</dbReference>
<dbReference type="UCSC" id="uc001ehy.2">
    <property type="organism name" value="human"/>
</dbReference>
<dbReference type="AGR" id="HGNC:32034"/>
<dbReference type="CTD" id="90874"/>
<dbReference type="GeneCards" id="ZNF697"/>
<dbReference type="HGNC" id="HGNC:32034">
    <property type="gene designation" value="ZNF697"/>
</dbReference>
<dbReference type="HPA" id="ENSG00000143067">
    <property type="expression patterns" value="Low tissue specificity"/>
</dbReference>
<dbReference type="MIM" id="620981">
    <property type="type" value="gene"/>
</dbReference>
<dbReference type="neXtProt" id="NX_Q5TEC3"/>
<dbReference type="OpenTargets" id="ENSG00000143067"/>
<dbReference type="PharmGKB" id="PA142670495"/>
<dbReference type="VEuPathDB" id="HostDB:ENSG00000143067"/>
<dbReference type="eggNOG" id="KOG1721">
    <property type="taxonomic scope" value="Eukaryota"/>
</dbReference>
<dbReference type="GeneTree" id="ENSGT00820000127150"/>
<dbReference type="HOGENOM" id="CLU_002678_57_3_1"/>
<dbReference type="InParanoid" id="Q5TEC3"/>
<dbReference type="OMA" id="EDKQGVC"/>
<dbReference type="OrthoDB" id="8113227at2759"/>
<dbReference type="PAN-GO" id="Q5TEC3">
    <property type="GO annotations" value="3 GO annotations based on evolutionary models"/>
</dbReference>
<dbReference type="PhylomeDB" id="Q5TEC3"/>
<dbReference type="TreeFam" id="TF350831"/>
<dbReference type="PathwayCommons" id="Q5TEC3"/>
<dbReference type="Reactome" id="R-HSA-212436">
    <property type="pathway name" value="Generic Transcription Pathway"/>
</dbReference>
<dbReference type="SignaLink" id="Q5TEC3"/>
<dbReference type="BioGRID-ORCS" id="90874">
    <property type="hits" value="11 hits in 1177 CRISPR screens"/>
</dbReference>
<dbReference type="ChiTaRS" id="ZNF697">
    <property type="organism name" value="human"/>
</dbReference>
<dbReference type="GenomeRNAi" id="90874"/>
<dbReference type="Pharos" id="Q5TEC3">
    <property type="development level" value="Tdark"/>
</dbReference>
<dbReference type="PRO" id="PR:Q5TEC3"/>
<dbReference type="Proteomes" id="UP000005640">
    <property type="component" value="Chromosome 1"/>
</dbReference>
<dbReference type="RNAct" id="Q5TEC3">
    <property type="molecule type" value="protein"/>
</dbReference>
<dbReference type="Bgee" id="ENSG00000143067">
    <property type="expression patterns" value="Expressed in cartilage tissue and 146 other cell types or tissues"/>
</dbReference>
<dbReference type="GO" id="GO:0005634">
    <property type="term" value="C:nucleus"/>
    <property type="evidence" value="ECO:0007669"/>
    <property type="project" value="UniProtKB-SubCell"/>
</dbReference>
<dbReference type="GO" id="GO:0000981">
    <property type="term" value="F:DNA-binding transcription factor activity, RNA polymerase II-specific"/>
    <property type="evidence" value="ECO:0000318"/>
    <property type="project" value="GO_Central"/>
</dbReference>
<dbReference type="GO" id="GO:0000978">
    <property type="term" value="F:RNA polymerase II cis-regulatory region sequence-specific DNA binding"/>
    <property type="evidence" value="ECO:0000318"/>
    <property type="project" value="GO_Central"/>
</dbReference>
<dbReference type="GO" id="GO:0008270">
    <property type="term" value="F:zinc ion binding"/>
    <property type="evidence" value="ECO:0007669"/>
    <property type="project" value="UniProtKB-KW"/>
</dbReference>
<dbReference type="GO" id="GO:0006357">
    <property type="term" value="P:regulation of transcription by RNA polymerase II"/>
    <property type="evidence" value="ECO:0000318"/>
    <property type="project" value="GO_Central"/>
</dbReference>
<dbReference type="FunFam" id="3.30.160.60:FF:002343">
    <property type="entry name" value="Zinc finger protein 33A"/>
    <property type="match status" value="1"/>
</dbReference>
<dbReference type="FunFam" id="3.30.160.60:FF:000016">
    <property type="entry name" value="zinc finger protein 37 homolog"/>
    <property type="match status" value="1"/>
</dbReference>
<dbReference type="FunFam" id="3.30.160.60:FF:000624">
    <property type="entry name" value="zinc finger protein 697"/>
    <property type="match status" value="1"/>
</dbReference>
<dbReference type="FunFam" id="3.30.160.60:FF:000711">
    <property type="entry name" value="zinc finger protein 697"/>
    <property type="match status" value="1"/>
</dbReference>
<dbReference type="FunFam" id="3.30.160.60:FF:000862">
    <property type="entry name" value="zinc finger protein 697"/>
    <property type="match status" value="1"/>
</dbReference>
<dbReference type="FunFam" id="3.30.160.60:FF:000931">
    <property type="entry name" value="zinc finger protein 697"/>
    <property type="match status" value="1"/>
</dbReference>
<dbReference type="FunFam" id="3.30.160.60:FF:001035">
    <property type="entry name" value="zinc finger protein 697"/>
    <property type="match status" value="1"/>
</dbReference>
<dbReference type="FunFam" id="3.30.160.60:FF:001076">
    <property type="entry name" value="zinc finger protein 697"/>
    <property type="match status" value="1"/>
</dbReference>
<dbReference type="FunFam" id="3.30.160.60:FF:000290">
    <property type="entry name" value="Zinc finger protein 697 isoform X1"/>
    <property type="match status" value="1"/>
</dbReference>
<dbReference type="FunFam" id="3.30.160.60:FF:000320">
    <property type="entry name" value="Zinc finger protein 777"/>
    <property type="match status" value="1"/>
</dbReference>
<dbReference type="Gene3D" id="3.30.160.60">
    <property type="entry name" value="Classic Zinc Finger"/>
    <property type="match status" value="10"/>
</dbReference>
<dbReference type="InterPro" id="IPR050331">
    <property type="entry name" value="Zinc_finger"/>
</dbReference>
<dbReference type="InterPro" id="IPR036236">
    <property type="entry name" value="Znf_C2H2_sf"/>
</dbReference>
<dbReference type="InterPro" id="IPR013087">
    <property type="entry name" value="Znf_C2H2_type"/>
</dbReference>
<dbReference type="PANTHER" id="PTHR16515:SF49">
    <property type="entry name" value="GASTRULA ZINC FINGER PROTEIN XLCGF49.1-LIKE-RELATED"/>
    <property type="match status" value="1"/>
</dbReference>
<dbReference type="PANTHER" id="PTHR16515">
    <property type="entry name" value="PR DOMAIN ZINC FINGER PROTEIN"/>
    <property type="match status" value="1"/>
</dbReference>
<dbReference type="Pfam" id="PF00096">
    <property type="entry name" value="zf-C2H2"/>
    <property type="match status" value="11"/>
</dbReference>
<dbReference type="SMART" id="SM00355">
    <property type="entry name" value="ZnF_C2H2"/>
    <property type="match status" value="11"/>
</dbReference>
<dbReference type="SUPFAM" id="SSF57667">
    <property type="entry name" value="beta-beta-alpha zinc fingers"/>
    <property type="match status" value="6"/>
</dbReference>
<dbReference type="PROSITE" id="PS00028">
    <property type="entry name" value="ZINC_FINGER_C2H2_1"/>
    <property type="match status" value="11"/>
</dbReference>
<dbReference type="PROSITE" id="PS50157">
    <property type="entry name" value="ZINC_FINGER_C2H2_2"/>
    <property type="match status" value="11"/>
</dbReference>
<protein>
    <recommendedName>
        <fullName>Zinc finger protein 697</fullName>
    </recommendedName>
</protein>
<keyword id="KW-0238">DNA-binding</keyword>
<keyword id="KW-1017">Isopeptide bond</keyword>
<keyword id="KW-0479">Metal-binding</keyword>
<keyword id="KW-0539">Nucleus</keyword>
<keyword id="KW-1267">Proteomics identification</keyword>
<keyword id="KW-1185">Reference proteome</keyword>
<keyword id="KW-0677">Repeat</keyword>
<keyword id="KW-0804">Transcription</keyword>
<keyword id="KW-0805">Transcription regulation</keyword>
<keyword id="KW-0832">Ubl conjugation</keyword>
<keyword id="KW-0862">Zinc</keyword>
<keyword id="KW-0863">Zinc-finger</keyword>